<proteinExistence type="evidence at protein level"/>
<name>FAEA_TALSN</name>
<feature type="chain" id="PRO_0000433996" description="Feruloyl esterase A">
    <location>
        <begin position="1"/>
        <end position="49" status="greater than"/>
    </location>
</feature>
<feature type="non-consecutive residues">
    <location>
        <begin position="28"/>
        <end position="29"/>
    </location>
</feature>
<feature type="non-consecutive residues">
    <location>
        <begin position="39"/>
        <end position="40"/>
    </location>
</feature>
<feature type="non-terminal residue">
    <location>
        <position position="49"/>
    </location>
</feature>
<evidence type="ECO:0000250" key="1">
    <source>
        <dbReference type="UniProtKB" id="O42807"/>
    </source>
</evidence>
<evidence type="ECO:0000269" key="2">
    <source>
    </source>
</evidence>
<evidence type="ECO:0000303" key="3">
    <source>
    </source>
</evidence>
<evidence type="ECO:0000305" key="4"/>
<sequence length="49" mass="5216">ASTQGISEDLYNRLVEMATIIQAAYADLAIYNAQTDINGASGNQAFASY</sequence>
<reference key="1">
    <citation type="journal article" date="2004" name="J. Biotechnol.">
        <title>The feruloyl esterase system of Talaromyces stipitatus: production of three discrete feruloyl esterases, including a novel enzyme, TsFaeC, with a broad substrate specificity.</title>
        <authorList>
            <person name="Garcia-Conesa M.T."/>
            <person name="Crepin V.F."/>
            <person name="Goldson A.J."/>
            <person name="Williamson G."/>
            <person name="Cummings N.J."/>
            <person name="Connerton I.F."/>
            <person name="Faulds C.B."/>
            <person name="Kroon P.A."/>
        </authorList>
    </citation>
    <scope>PARTIAL PROTEIN SEQUENCE</scope>
    <scope>FUNCTION</scope>
    <scope>CATALYTIC ACTIVITY</scope>
    <source>
        <strain>ATCC 10500 / CBS 375.48 / QM 6759 / NRRL 1006</strain>
    </source>
</reference>
<keyword id="KW-0119">Carbohydrate metabolism</keyword>
<keyword id="KW-0903">Direct protein sequencing</keyword>
<keyword id="KW-0378">Hydrolase</keyword>
<keyword id="KW-0624">Polysaccharide degradation</keyword>
<keyword id="KW-0964">Secreted</keyword>
<keyword id="KW-0719">Serine esterase</keyword>
<keyword id="KW-0858">Xylan degradation</keyword>
<comment type="function">
    <text evidence="1 2">Involved in degradation of plant cell walls. Hydrolyzes the feruloyl-arabinose ester bond in arabinoxylans as well as the feruloyl-galactose and feruloyl-arabinose ester bonds in pectin (By similarity). Active against methyl esters of sinapate (MSA), but not caffeate (MCA) (PubMed:15006424).</text>
</comment>
<comment type="catalytic activity">
    <reaction evidence="2">
        <text>feruloyl-polysaccharide + H2O = ferulate + polysaccharide.</text>
        <dbReference type="EC" id="3.1.1.73"/>
    </reaction>
</comment>
<comment type="subcellular location">
    <subcellularLocation>
        <location evidence="1">Secreted</location>
    </subcellularLocation>
</comment>
<comment type="similarity">
    <text evidence="4">Belongs to the AB hydrolase superfamily. FaeA family.</text>
</comment>
<organism>
    <name type="scientific">Talaromyces stipitatus (strain ATCC 10500 / CBS 375.48 / QM 6759 / NRRL 1006)</name>
    <name type="common">Penicillium stipitatum</name>
    <dbReference type="NCBI Taxonomy" id="441959"/>
    <lineage>
        <taxon>Eukaryota</taxon>
        <taxon>Fungi</taxon>
        <taxon>Dikarya</taxon>
        <taxon>Ascomycota</taxon>
        <taxon>Pezizomycotina</taxon>
        <taxon>Eurotiomycetes</taxon>
        <taxon>Eurotiomycetidae</taxon>
        <taxon>Eurotiales</taxon>
        <taxon>Trichocomaceae</taxon>
        <taxon>Talaromyces</taxon>
        <taxon>Talaromyces sect. Talaromyces</taxon>
    </lineage>
</organism>
<accession>P0CT85</accession>
<protein>
    <recommendedName>
        <fullName evidence="3">Feruloyl esterase A</fullName>
        <ecNumber evidence="2">3.1.1.73</ecNumber>
    </recommendedName>
    <alternativeName>
        <fullName>Ferulic acid esterase A</fullName>
        <shortName>FAE</shortName>
    </alternativeName>
</protein>
<dbReference type="EC" id="3.1.1.73" evidence="2"/>
<dbReference type="SMR" id="P0CT85"/>
<dbReference type="GO" id="GO:0005576">
    <property type="term" value="C:extracellular region"/>
    <property type="evidence" value="ECO:0007669"/>
    <property type="project" value="UniProtKB-SubCell"/>
</dbReference>
<dbReference type="GO" id="GO:0030600">
    <property type="term" value="F:feruloyl esterase activity"/>
    <property type="evidence" value="ECO:0007669"/>
    <property type="project" value="UniProtKB-EC"/>
</dbReference>
<dbReference type="GO" id="GO:0045493">
    <property type="term" value="P:xylan catabolic process"/>
    <property type="evidence" value="ECO:0007669"/>
    <property type="project" value="UniProtKB-KW"/>
</dbReference>